<sequence length="211" mass="23109">MANCVVLDWQGQEAGKATLDLKVAKETTAVDLIHRAVVRQQAHSRQGTASTLTRSEVRGGGRKPYKQKGTGRARQGSIRTPLRPGGGIIFGPKPRSFSLGMNRKERRLALRTALMARINDLMIVQDFGTALKVPKTREIVEALSRFGIADDAKVLIILAQPSEIIIRSVRNIERVKVIGADQLNVFDLLNANSLVIGEKALSTIKEVYGDD</sequence>
<comment type="function">
    <text evidence="1">One of the primary rRNA binding proteins, this protein initially binds near the 5'-end of the 23S rRNA. It is important during the early stages of 50S assembly. It makes multiple contacts with different domains of the 23S rRNA in the assembled 50S subunit and ribosome.</text>
</comment>
<comment type="function">
    <text evidence="1">Forms part of the polypeptide exit tunnel.</text>
</comment>
<comment type="subunit">
    <text evidence="1">Part of the 50S ribosomal subunit.</text>
</comment>
<comment type="similarity">
    <text evidence="1">Belongs to the universal ribosomal protein uL4 family.</text>
</comment>
<name>RL4_PROM4</name>
<protein>
    <recommendedName>
        <fullName evidence="1">Large ribosomal subunit protein uL4</fullName>
    </recommendedName>
    <alternativeName>
        <fullName evidence="3">50S ribosomal protein L4</fullName>
    </alternativeName>
</protein>
<gene>
    <name evidence="1" type="primary">rplD</name>
    <name evidence="1" type="synonym">rpl4</name>
    <name type="ordered locus">P9211_16771</name>
</gene>
<keyword id="KW-1185">Reference proteome</keyword>
<keyword id="KW-0687">Ribonucleoprotein</keyword>
<keyword id="KW-0689">Ribosomal protein</keyword>
<keyword id="KW-0694">RNA-binding</keyword>
<keyword id="KW-0699">rRNA-binding</keyword>
<reference key="1">
    <citation type="journal article" date="2007" name="PLoS Genet.">
        <title>Patterns and implications of gene gain and loss in the evolution of Prochlorococcus.</title>
        <authorList>
            <person name="Kettler G.C."/>
            <person name="Martiny A.C."/>
            <person name="Huang K."/>
            <person name="Zucker J."/>
            <person name="Coleman M.L."/>
            <person name="Rodrigue S."/>
            <person name="Chen F."/>
            <person name="Lapidus A."/>
            <person name="Ferriera S."/>
            <person name="Johnson J."/>
            <person name="Steglich C."/>
            <person name="Church G.M."/>
            <person name="Richardson P."/>
            <person name="Chisholm S.W."/>
        </authorList>
    </citation>
    <scope>NUCLEOTIDE SEQUENCE [LARGE SCALE GENOMIC DNA]</scope>
    <source>
        <strain>MIT 9211</strain>
    </source>
</reference>
<dbReference type="EMBL" id="CP000878">
    <property type="protein sequence ID" value="ABX09608.1"/>
    <property type="molecule type" value="Genomic_DNA"/>
</dbReference>
<dbReference type="RefSeq" id="WP_012196228.1">
    <property type="nucleotide sequence ID" value="NC_009976.1"/>
</dbReference>
<dbReference type="SMR" id="A9BCP6"/>
<dbReference type="STRING" id="93059.P9211_16771"/>
<dbReference type="KEGG" id="pmj:P9211_16771"/>
<dbReference type="eggNOG" id="COG0088">
    <property type="taxonomic scope" value="Bacteria"/>
</dbReference>
<dbReference type="HOGENOM" id="CLU_041575_5_2_3"/>
<dbReference type="OrthoDB" id="9803201at2"/>
<dbReference type="Proteomes" id="UP000000788">
    <property type="component" value="Chromosome"/>
</dbReference>
<dbReference type="GO" id="GO:1990904">
    <property type="term" value="C:ribonucleoprotein complex"/>
    <property type="evidence" value="ECO:0007669"/>
    <property type="project" value="UniProtKB-KW"/>
</dbReference>
<dbReference type="GO" id="GO:0005840">
    <property type="term" value="C:ribosome"/>
    <property type="evidence" value="ECO:0007669"/>
    <property type="project" value="UniProtKB-KW"/>
</dbReference>
<dbReference type="GO" id="GO:0019843">
    <property type="term" value="F:rRNA binding"/>
    <property type="evidence" value="ECO:0007669"/>
    <property type="project" value="UniProtKB-UniRule"/>
</dbReference>
<dbReference type="GO" id="GO:0003735">
    <property type="term" value="F:structural constituent of ribosome"/>
    <property type="evidence" value="ECO:0007669"/>
    <property type="project" value="InterPro"/>
</dbReference>
<dbReference type="GO" id="GO:0006412">
    <property type="term" value="P:translation"/>
    <property type="evidence" value="ECO:0007669"/>
    <property type="project" value="UniProtKB-UniRule"/>
</dbReference>
<dbReference type="Gene3D" id="3.40.1370.10">
    <property type="match status" value="1"/>
</dbReference>
<dbReference type="HAMAP" id="MF_01328_B">
    <property type="entry name" value="Ribosomal_uL4_B"/>
    <property type="match status" value="1"/>
</dbReference>
<dbReference type="InterPro" id="IPR002136">
    <property type="entry name" value="Ribosomal_uL4"/>
</dbReference>
<dbReference type="InterPro" id="IPR013005">
    <property type="entry name" value="Ribosomal_uL4-like"/>
</dbReference>
<dbReference type="InterPro" id="IPR023574">
    <property type="entry name" value="Ribosomal_uL4_dom_sf"/>
</dbReference>
<dbReference type="NCBIfam" id="TIGR03953">
    <property type="entry name" value="rplD_bact"/>
    <property type="match status" value="1"/>
</dbReference>
<dbReference type="PANTHER" id="PTHR10746">
    <property type="entry name" value="50S RIBOSOMAL PROTEIN L4"/>
    <property type="match status" value="1"/>
</dbReference>
<dbReference type="PANTHER" id="PTHR10746:SF17">
    <property type="entry name" value="LARGE RIBOSOMAL SUBUNIT PROTEIN UL4C"/>
    <property type="match status" value="1"/>
</dbReference>
<dbReference type="Pfam" id="PF00573">
    <property type="entry name" value="Ribosomal_L4"/>
    <property type="match status" value="1"/>
</dbReference>
<dbReference type="SUPFAM" id="SSF52166">
    <property type="entry name" value="Ribosomal protein L4"/>
    <property type="match status" value="1"/>
</dbReference>
<feature type="chain" id="PRO_1000142169" description="Large ribosomal subunit protein uL4">
    <location>
        <begin position="1"/>
        <end position="211"/>
    </location>
</feature>
<feature type="region of interest" description="Disordered" evidence="2">
    <location>
        <begin position="40"/>
        <end position="80"/>
    </location>
</feature>
<feature type="compositionally biased region" description="Polar residues" evidence="2">
    <location>
        <begin position="41"/>
        <end position="54"/>
    </location>
</feature>
<feature type="compositionally biased region" description="Basic residues" evidence="2">
    <location>
        <begin position="60"/>
        <end position="71"/>
    </location>
</feature>
<evidence type="ECO:0000255" key="1">
    <source>
        <dbReference type="HAMAP-Rule" id="MF_01328"/>
    </source>
</evidence>
<evidence type="ECO:0000256" key="2">
    <source>
        <dbReference type="SAM" id="MobiDB-lite"/>
    </source>
</evidence>
<evidence type="ECO:0000305" key="3"/>
<proteinExistence type="inferred from homology"/>
<accession>A9BCP6</accession>
<organism>
    <name type="scientific">Prochlorococcus marinus (strain MIT 9211)</name>
    <dbReference type="NCBI Taxonomy" id="93059"/>
    <lineage>
        <taxon>Bacteria</taxon>
        <taxon>Bacillati</taxon>
        <taxon>Cyanobacteriota</taxon>
        <taxon>Cyanophyceae</taxon>
        <taxon>Synechococcales</taxon>
        <taxon>Prochlorococcaceae</taxon>
        <taxon>Prochlorococcus</taxon>
    </lineage>
</organism>